<evidence type="ECO:0000255" key="1">
    <source>
        <dbReference type="HAMAP-Rule" id="MF_01363"/>
    </source>
</evidence>
<evidence type="ECO:0000305" key="2"/>
<gene>
    <name evidence="1" type="primary">rplU</name>
    <name type="ordered locus">Rfer_1268</name>
</gene>
<organism>
    <name type="scientific">Albidiferax ferrireducens (strain ATCC BAA-621 / DSM 15236 / T118)</name>
    <name type="common">Rhodoferax ferrireducens</name>
    <dbReference type="NCBI Taxonomy" id="338969"/>
    <lineage>
        <taxon>Bacteria</taxon>
        <taxon>Pseudomonadati</taxon>
        <taxon>Pseudomonadota</taxon>
        <taxon>Betaproteobacteria</taxon>
        <taxon>Burkholderiales</taxon>
        <taxon>Comamonadaceae</taxon>
        <taxon>Rhodoferax</taxon>
    </lineage>
</organism>
<accession>Q21Z01</accession>
<name>RL21_ALBFT</name>
<sequence>MYAVIKTGGKQYRVAAGEKIKVEQIAADVGQEIVFNEVLAVGNGAELKVGTPLVSGATVSVTVLAHGKHDKVSIFKMRRRKHYQKRQGHRQQFTELLVNTIAG</sequence>
<proteinExistence type="inferred from homology"/>
<comment type="function">
    <text evidence="1">This protein binds to 23S rRNA in the presence of protein L20.</text>
</comment>
<comment type="subunit">
    <text evidence="1">Part of the 50S ribosomal subunit. Contacts protein L20.</text>
</comment>
<comment type="similarity">
    <text evidence="1">Belongs to the bacterial ribosomal protein bL21 family.</text>
</comment>
<comment type="sequence caution" evidence="2">
    <conflict type="erroneous initiation">
        <sequence resource="EMBL-CDS" id="ABD69002"/>
    </conflict>
</comment>
<keyword id="KW-1185">Reference proteome</keyword>
<keyword id="KW-0687">Ribonucleoprotein</keyword>
<keyword id="KW-0689">Ribosomal protein</keyword>
<keyword id="KW-0694">RNA-binding</keyword>
<keyword id="KW-0699">rRNA-binding</keyword>
<dbReference type="EMBL" id="CP000267">
    <property type="protein sequence ID" value="ABD69002.1"/>
    <property type="status" value="ALT_INIT"/>
    <property type="molecule type" value="Genomic_DNA"/>
</dbReference>
<dbReference type="RefSeq" id="WP_041790293.1">
    <property type="nucleotide sequence ID" value="NC_007908.1"/>
</dbReference>
<dbReference type="SMR" id="Q21Z01"/>
<dbReference type="STRING" id="338969.Rfer_1268"/>
<dbReference type="KEGG" id="rfr:Rfer_1268"/>
<dbReference type="eggNOG" id="COG0261">
    <property type="taxonomic scope" value="Bacteria"/>
</dbReference>
<dbReference type="HOGENOM" id="CLU_061463_3_1_4"/>
<dbReference type="OrthoDB" id="9813334at2"/>
<dbReference type="Proteomes" id="UP000008332">
    <property type="component" value="Chromosome"/>
</dbReference>
<dbReference type="GO" id="GO:0005737">
    <property type="term" value="C:cytoplasm"/>
    <property type="evidence" value="ECO:0007669"/>
    <property type="project" value="UniProtKB-ARBA"/>
</dbReference>
<dbReference type="GO" id="GO:1990904">
    <property type="term" value="C:ribonucleoprotein complex"/>
    <property type="evidence" value="ECO:0007669"/>
    <property type="project" value="UniProtKB-KW"/>
</dbReference>
<dbReference type="GO" id="GO:0005840">
    <property type="term" value="C:ribosome"/>
    <property type="evidence" value="ECO:0007669"/>
    <property type="project" value="UniProtKB-KW"/>
</dbReference>
<dbReference type="GO" id="GO:0019843">
    <property type="term" value="F:rRNA binding"/>
    <property type="evidence" value="ECO:0007669"/>
    <property type="project" value="UniProtKB-UniRule"/>
</dbReference>
<dbReference type="GO" id="GO:0003735">
    <property type="term" value="F:structural constituent of ribosome"/>
    <property type="evidence" value="ECO:0007669"/>
    <property type="project" value="InterPro"/>
</dbReference>
<dbReference type="GO" id="GO:0006412">
    <property type="term" value="P:translation"/>
    <property type="evidence" value="ECO:0007669"/>
    <property type="project" value="UniProtKB-UniRule"/>
</dbReference>
<dbReference type="HAMAP" id="MF_01363">
    <property type="entry name" value="Ribosomal_bL21"/>
    <property type="match status" value="1"/>
</dbReference>
<dbReference type="InterPro" id="IPR028909">
    <property type="entry name" value="bL21-like"/>
</dbReference>
<dbReference type="InterPro" id="IPR036164">
    <property type="entry name" value="bL21-like_sf"/>
</dbReference>
<dbReference type="InterPro" id="IPR001787">
    <property type="entry name" value="Ribosomal_bL21"/>
</dbReference>
<dbReference type="InterPro" id="IPR018258">
    <property type="entry name" value="Ribosomal_bL21_CS"/>
</dbReference>
<dbReference type="NCBIfam" id="TIGR00061">
    <property type="entry name" value="L21"/>
    <property type="match status" value="1"/>
</dbReference>
<dbReference type="PANTHER" id="PTHR21349">
    <property type="entry name" value="50S RIBOSOMAL PROTEIN L21"/>
    <property type="match status" value="1"/>
</dbReference>
<dbReference type="PANTHER" id="PTHR21349:SF0">
    <property type="entry name" value="LARGE RIBOSOMAL SUBUNIT PROTEIN BL21M"/>
    <property type="match status" value="1"/>
</dbReference>
<dbReference type="Pfam" id="PF00829">
    <property type="entry name" value="Ribosomal_L21p"/>
    <property type="match status" value="1"/>
</dbReference>
<dbReference type="SUPFAM" id="SSF141091">
    <property type="entry name" value="L21p-like"/>
    <property type="match status" value="1"/>
</dbReference>
<dbReference type="PROSITE" id="PS01169">
    <property type="entry name" value="RIBOSOMAL_L21"/>
    <property type="match status" value="1"/>
</dbReference>
<reference key="1">
    <citation type="submission" date="2006-02" db="EMBL/GenBank/DDBJ databases">
        <title>Complete sequence of chromosome of Rhodoferax ferrireducens DSM 15236.</title>
        <authorList>
            <person name="Copeland A."/>
            <person name="Lucas S."/>
            <person name="Lapidus A."/>
            <person name="Barry K."/>
            <person name="Detter J.C."/>
            <person name="Glavina del Rio T."/>
            <person name="Hammon N."/>
            <person name="Israni S."/>
            <person name="Pitluck S."/>
            <person name="Brettin T."/>
            <person name="Bruce D."/>
            <person name="Han C."/>
            <person name="Tapia R."/>
            <person name="Gilna P."/>
            <person name="Kiss H."/>
            <person name="Schmutz J."/>
            <person name="Larimer F."/>
            <person name="Land M."/>
            <person name="Kyrpides N."/>
            <person name="Ivanova N."/>
            <person name="Richardson P."/>
        </authorList>
    </citation>
    <scope>NUCLEOTIDE SEQUENCE [LARGE SCALE GENOMIC DNA]</scope>
    <source>
        <strain>ATCC BAA-621 / DSM 15236 / T118</strain>
    </source>
</reference>
<protein>
    <recommendedName>
        <fullName evidence="1">Large ribosomal subunit protein bL21</fullName>
    </recommendedName>
    <alternativeName>
        <fullName evidence="2">50S ribosomal protein L21</fullName>
    </alternativeName>
</protein>
<feature type="chain" id="PRO_0000270722" description="Large ribosomal subunit protein bL21">
    <location>
        <begin position="1"/>
        <end position="103"/>
    </location>
</feature>